<organism>
    <name type="scientific">Erwinia tasmaniensis (strain DSM 17950 / CFBP 7177 / CIP 109463 / NCPPB 4357 / Et1/99)</name>
    <dbReference type="NCBI Taxonomy" id="465817"/>
    <lineage>
        <taxon>Bacteria</taxon>
        <taxon>Pseudomonadati</taxon>
        <taxon>Pseudomonadota</taxon>
        <taxon>Gammaproteobacteria</taxon>
        <taxon>Enterobacterales</taxon>
        <taxon>Erwiniaceae</taxon>
        <taxon>Erwinia</taxon>
    </lineage>
</organism>
<gene>
    <name evidence="1" type="primary">dxr</name>
    <name type="ordered locus">ETA_08940</name>
</gene>
<comment type="function">
    <text evidence="1">Catalyzes the NADPH-dependent rearrangement and reduction of 1-deoxy-D-xylulose-5-phosphate (DXP) to 2-C-methyl-D-erythritol 4-phosphate (MEP).</text>
</comment>
<comment type="catalytic activity">
    <reaction evidence="1">
        <text>2-C-methyl-D-erythritol 4-phosphate + NADP(+) = 1-deoxy-D-xylulose 5-phosphate + NADPH + H(+)</text>
        <dbReference type="Rhea" id="RHEA:13717"/>
        <dbReference type="ChEBI" id="CHEBI:15378"/>
        <dbReference type="ChEBI" id="CHEBI:57783"/>
        <dbReference type="ChEBI" id="CHEBI:57792"/>
        <dbReference type="ChEBI" id="CHEBI:58262"/>
        <dbReference type="ChEBI" id="CHEBI:58349"/>
        <dbReference type="EC" id="1.1.1.267"/>
    </reaction>
    <physiologicalReaction direction="right-to-left" evidence="1">
        <dbReference type="Rhea" id="RHEA:13719"/>
    </physiologicalReaction>
</comment>
<comment type="cofactor">
    <cofactor evidence="1">
        <name>Mg(2+)</name>
        <dbReference type="ChEBI" id="CHEBI:18420"/>
    </cofactor>
    <cofactor evidence="1">
        <name>Mn(2+)</name>
        <dbReference type="ChEBI" id="CHEBI:29035"/>
    </cofactor>
</comment>
<comment type="pathway">
    <text evidence="1">Isoprenoid biosynthesis; isopentenyl diphosphate biosynthesis via DXP pathway; isopentenyl diphosphate from 1-deoxy-D-xylulose 5-phosphate: step 1/6.</text>
</comment>
<comment type="subunit">
    <text evidence="1">Homodimer.</text>
</comment>
<comment type="similarity">
    <text evidence="1">Belongs to the DXR family.</text>
</comment>
<proteinExistence type="inferred from homology"/>
<keyword id="KW-0414">Isoprene biosynthesis</keyword>
<keyword id="KW-0464">Manganese</keyword>
<keyword id="KW-0479">Metal-binding</keyword>
<keyword id="KW-0521">NADP</keyword>
<keyword id="KW-0560">Oxidoreductase</keyword>
<keyword id="KW-1185">Reference proteome</keyword>
<feature type="chain" id="PRO_1000098494" description="1-deoxy-D-xylulose 5-phosphate reductoisomerase">
    <location>
        <begin position="1"/>
        <end position="404"/>
    </location>
</feature>
<feature type="binding site" evidence="1">
    <location>
        <position position="10"/>
    </location>
    <ligand>
        <name>NADPH</name>
        <dbReference type="ChEBI" id="CHEBI:57783"/>
    </ligand>
</feature>
<feature type="binding site" evidence="1">
    <location>
        <position position="11"/>
    </location>
    <ligand>
        <name>NADPH</name>
        <dbReference type="ChEBI" id="CHEBI:57783"/>
    </ligand>
</feature>
<feature type="binding site" evidence="1">
    <location>
        <position position="12"/>
    </location>
    <ligand>
        <name>NADPH</name>
        <dbReference type="ChEBI" id="CHEBI:57783"/>
    </ligand>
</feature>
<feature type="binding site" evidence="1">
    <location>
        <position position="13"/>
    </location>
    <ligand>
        <name>NADPH</name>
        <dbReference type="ChEBI" id="CHEBI:57783"/>
    </ligand>
</feature>
<feature type="binding site" evidence="1">
    <location>
        <position position="36"/>
    </location>
    <ligand>
        <name>NADPH</name>
        <dbReference type="ChEBI" id="CHEBI:57783"/>
    </ligand>
</feature>
<feature type="binding site" evidence="1">
    <location>
        <position position="37"/>
    </location>
    <ligand>
        <name>NADPH</name>
        <dbReference type="ChEBI" id="CHEBI:57783"/>
    </ligand>
</feature>
<feature type="binding site" evidence="1">
    <location>
        <position position="38"/>
    </location>
    <ligand>
        <name>NADPH</name>
        <dbReference type="ChEBI" id="CHEBI:57783"/>
    </ligand>
</feature>
<feature type="binding site" evidence="1">
    <location>
        <position position="124"/>
    </location>
    <ligand>
        <name>NADPH</name>
        <dbReference type="ChEBI" id="CHEBI:57783"/>
    </ligand>
</feature>
<feature type="binding site" evidence="1">
    <location>
        <position position="125"/>
    </location>
    <ligand>
        <name>1-deoxy-D-xylulose 5-phosphate</name>
        <dbReference type="ChEBI" id="CHEBI:57792"/>
    </ligand>
</feature>
<feature type="binding site" evidence="1">
    <location>
        <position position="126"/>
    </location>
    <ligand>
        <name>NADPH</name>
        <dbReference type="ChEBI" id="CHEBI:57783"/>
    </ligand>
</feature>
<feature type="binding site" evidence="1">
    <location>
        <position position="150"/>
    </location>
    <ligand>
        <name>Mn(2+)</name>
        <dbReference type="ChEBI" id="CHEBI:29035"/>
    </ligand>
</feature>
<feature type="binding site" evidence="1">
    <location>
        <position position="151"/>
    </location>
    <ligand>
        <name>1-deoxy-D-xylulose 5-phosphate</name>
        <dbReference type="ChEBI" id="CHEBI:57792"/>
    </ligand>
</feature>
<feature type="binding site" evidence="1">
    <location>
        <position position="152"/>
    </location>
    <ligand>
        <name>1-deoxy-D-xylulose 5-phosphate</name>
        <dbReference type="ChEBI" id="CHEBI:57792"/>
    </ligand>
</feature>
<feature type="binding site" evidence="1">
    <location>
        <position position="152"/>
    </location>
    <ligand>
        <name>Mn(2+)</name>
        <dbReference type="ChEBI" id="CHEBI:29035"/>
    </ligand>
</feature>
<feature type="binding site" evidence="1">
    <location>
        <position position="186"/>
    </location>
    <ligand>
        <name>1-deoxy-D-xylulose 5-phosphate</name>
        <dbReference type="ChEBI" id="CHEBI:57792"/>
    </ligand>
</feature>
<feature type="binding site" evidence="1">
    <location>
        <position position="209"/>
    </location>
    <ligand>
        <name>1-deoxy-D-xylulose 5-phosphate</name>
        <dbReference type="ChEBI" id="CHEBI:57792"/>
    </ligand>
</feature>
<feature type="binding site" evidence="1">
    <location>
        <position position="215"/>
    </location>
    <ligand>
        <name>NADPH</name>
        <dbReference type="ChEBI" id="CHEBI:57783"/>
    </ligand>
</feature>
<feature type="binding site" evidence="1">
    <location>
        <position position="222"/>
    </location>
    <ligand>
        <name>1-deoxy-D-xylulose 5-phosphate</name>
        <dbReference type="ChEBI" id="CHEBI:57792"/>
    </ligand>
</feature>
<feature type="binding site" evidence="1">
    <location>
        <position position="227"/>
    </location>
    <ligand>
        <name>1-deoxy-D-xylulose 5-phosphate</name>
        <dbReference type="ChEBI" id="CHEBI:57792"/>
    </ligand>
</feature>
<feature type="binding site" evidence="1">
    <location>
        <position position="228"/>
    </location>
    <ligand>
        <name>1-deoxy-D-xylulose 5-phosphate</name>
        <dbReference type="ChEBI" id="CHEBI:57792"/>
    </ligand>
</feature>
<feature type="binding site" evidence="1">
    <location>
        <position position="231"/>
    </location>
    <ligand>
        <name>1-deoxy-D-xylulose 5-phosphate</name>
        <dbReference type="ChEBI" id="CHEBI:57792"/>
    </ligand>
</feature>
<feature type="binding site" evidence="1">
    <location>
        <position position="231"/>
    </location>
    <ligand>
        <name>Mn(2+)</name>
        <dbReference type="ChEBI" id="CHEBI:29035"/>
    </ligand>
</feature>
<sequence length="404" mass="43243">MKQLTILGSTGSIGTSTLAVVRANPQLFAVKALVAGRNVELMTGQCLEFRPAYAAMSDKRAAEELRLRLKDLNVATEVLSGEQAACDLAALDDVDQVMAAIVGAAGLLPTLAAIRAGKKVLLANKESLVTCGRLFLEAVSASKAQLLPIDSEHNAIFQSLPASLQQQLGYASLENNGIESIILTGSGGPFRDTPLVELPHMTPDQACAHPNWSMGRKISVDSATMMNKGLEYIEARWLFNATDAQMEVILHPQSVIHSMVRYRDGSVIAQLGSPDMRTPIAHAMAWPQRVESGVQPLDFTRMSAMTFAQPDYTRYPCLKLAMDASKAGQAATTTLNAANEIAVAAFLASEIRFTDIAALNVAVLDTLSCQEPQNVDAVIAIDREARAAAQALLPRFAAKRASVI</sequence>
<dbReference type="EC" id="1.1.1.267" evidence="1"/>
<dbReference type="EMBL" id="CU468135">
    <property type="protein sequence ID" value="CAO95940.1"/>
    <property type="molecule type" value="Genomic_DNA"/>
</dbReference>
<dbReference type="RefSeq" id="WP_012440642.1">
    <property type="nucleotide sequence ID" value="NC_010694.1"/>
</dbReference>
<dbReference type="SMR" id="B2VE12"/>
<dbReference type="STRING" id="465817.ETA_08940"/>
<dbReference type="KEGG" id="eta:ETA_08940"/>
<dbReference type="eggNOG" id="COG0743">
    <property type="taxonomic scope" value="Bacteria"/>
</dbReference>
<dbReference type="HOGENOM" id="CLU_035714_4_0_6"/>
<dbReference type="OrthoDB" id="9806546at2"/>
<dbReference type="UniPathway" id="UPA00056">
    <property type="reaction ID" value="UER00092"/>
</dbReference>
<dbReference type="Proteomes" id="UP000001726">
    <property type="component" value="Chromosome"/>
</dbReference>
<dbReference type="GO" id="GO:0030604">
    <property type="term" value="F:1-deoxy-D-xylulose-5-phosphate reductoisomerase activity"/>
    <property type="evidence" value="ECO:0007669"/>
    <property type="project" value="UniProtKB-UniRule"/>
</dbReference>
<dbReference type="GO" id="GO:0030145">
    <property type="term" value="F:manganese ion binding"/>
    <property type="evidence" value="ECO:0007669"/>
    <property type="project" value="TreeGrafter"/>
</dbReference>
<dbReference type="GO" id="GO:0070402">
    <property type="term" value="F:NADPH binding"/>
    <property type="evidence" value="ECO:0007669"/>
    <property type="project" value="InterPro"/>
</dbReference>
<dbReference type="GO" id="GO:0051484">
    <property type="term" value="P:isopentenyl diphosphate biosynthetic process, methylerythritol 4-phosphate pathway involved in terpenoid biosynthetic process"/>
    <property type="evidence" value="ECO:0007669"/>
    <property type="project" value="TreeGrafter"/>
</dbReference>
<dbReference type="FunFam" id="1.10.1740.10:FF:000004">
    <property type="entry name" value="1-deoxy-D-xylulose 5-phosphate reductoisomerase"/>
    <property type="match status" value="1"/>
</dbReference>
<dbReference type="FunFam" id="3.40.50.720:FF:000045">
    <property type="entry name" value="1-deoxy-D-xylulose 5-phosphate reductoisomerase"/>
    <property type="match status" value="1"/>
</dbReference>
<dbReference type="Gene3D" id="1.10.1740.10">
    <property type="match status" value="1"/>
</dbReference>
<dbReference type="Gene3D" id="3.40.50.720">
    <property type="entry name" value="NAD(P)-binding Rossmann-like Domain"/>
    <property type="match status" value="1"/>
</dbReference>
<dbReference type="HAMAP" id="MF_00183">
    <property type="entry name" value="DXP_reductoisom"/>
    <property type="match status" value="1"/>
</dbReference>
<dbReference type="InterPro" id="IPR003821">
    <property type="entry name" value="DXP_reductoisomerase"/>
</dbReference>
<dbReference type="InterPro" id="IPR013644">
    <property type="entry name" value="DXP_reductoisomerase_C"/>
</dbReference>
<dbReference type="InterPro" id="IPR013512">
    <property type="entry name" value="DXP_reductoisomerase_N"/>
</dbReference>
<dbReference type="InterPro" id="IPR026877">
    <property type="entry name" value="DXPR_C"/>
</dbReference>
<dbReference type="InterPro" id="IPR036169">
    <property type="entry name" value="DXPR_C_sf"/>
</dbReference>
<dbReference type="InterPro" id="IPR036291">
    <property type="entry name" value="NAD(P)-bd_dom_sf"/>
</dbReference>
<dbReference type="NCBIfam" id="TIGR00243">
    <property type="entry name" value="Dxr"/>
    <property type="match status" value="1"/>
</dbReference>
<dbReference type="NCBIfam" id="NF003938">
    <property type="entry name" value="PRK05447.1-1"/>
    <property type="match status" value="1"/>
</dbReference>
<dbReference type="NCBIfam" id="NF009114">
    <property type="entry name" value="PRK12464.1"/>
    <property type="match status" value="1"/>
</dbReference>
<dbReference type="PANTHER" id="PTHR30525">
    <property type="entry name" value="1-DEOXY-D-XYLULOSE 5-PHOSPHATE REDUCTOISOMERASE"/>
    <property type="match status" value="1"/>
</dbReference>
<dbReference type="PANTHER" id="PTHR30525:SF0">
    <property type="entry name" value="1-DEOXY-D-XYLULOSE 5-PHOSPHATE REDUCTOISOMERASE, CHLOROPLASTIC"/>
    <property type="match status" value="1"/>
</dbReference>
<dbReference type="Pfam" id="PF08436">
    <property type="entry name" value="DXP_redisom_C"/>
    <property type="match status" value="1"/>
</dbReference>
<dbReference type="Pfam" id="PF02670">
    <property type="entry name" value="DXP_reductoisom"/>
    <property type="match status" value="1"/>
</dbReference>
<dbReference type="Pfam" id="PF13288">
    <property type="entry name" value="DXPR_C"/>
    <property type="match status" value="1"/>
</dbReference>
<dbReference type="PIRSF" id="PIRSF006205">
    <property type="entry name" value="Dxp_reductismrs"/>
    <property type="match status" value="1"/>
</dbReference>
<dbReference type="SUPFAM" id="SSF69055">
    <property type="entry name" value="1-deoxy-D-xylulose-5-phosphate reductoisomerase, C-terminal domain"/>
    <property type="match status" value="1"/>
</dbReference>
<dbReference type="SUPFAM" id="SSF55347">
    <property type="entry name" value="Glyceraldehyde-3-phosphate dehydrogenase-like, C-terminal domain"/>
    <property type="match status" value="1"/>
</dbReference>
<dbReference type="SUPFAM" id="SSF51735">
    <property type="entry name" value="NAD(P)-binding Rossmann-fold domains"/>
    <property type="match status" value="1"/>
</dbReference>
<reference key="1">
    <citation type="journal article" date="2008" name="Environ. Microbiol.">
        <title>The genome of Erwinia tasmaniensis strain Et1/99, a non-pathogenic bacterium in the genus Erwinia.</title>
        <authorList>
            <person name="Kube M."/>
            <person name="Migdoll A.M."/>
            <person name="Mueller I."/>
            <person name="Kuhl H."/>
            <person name="Beck A."/>
            <person name="Reinhardt R."/>
            <person name="Geider K."/>
        </authorList>
    </citation>
    <scope>NUCLEOTIDE SEQUENCE [LARGE SCALE GENOMIC DNA]</scope>
    <source>
        <strain>DSM 17950 / CFBP 7177 / CIP 109463 / NCPPB 4357 / Et1/99</strain>
    </source>
</reference>
<evidence type="ECO:0000255" key="1">
    <source>
        <dbReference type="HAMAP-Rule" id="MF_00183"/>
    </source>
</evidence>
<protein>
    <recommendedName>
        <fullName evidence="1">1-deoxy-D-xylulose 5-phosphate reductoisomerase</fullName>
        <shortName evidence="1">DXP reductoisomerase</shortName>
        <ecNumber evidence="1">1.1.1.267</ecNumber>
    </recommendedName>
    <alternativeName>
        <fullName evidence="1">1-deoxyxylulose-5-phosphate reductoisomerase</fullName>
    </alternativeName>
    <alternativeName>
        <fullName evidence="1">2-C-methyl-D-erythritol 4-phosphate synthase</fullName>
    </alternativeName>
</protein>
<accession>B2VE12</accession>
<name>DXR_ERWT9</name>